<organism>
    <name type="scientific">Clostridium novyi (strain NT)</name>
    <dbReference type="NCBI Taxonomy" id="386415"/>
    <lineage>
        <taxon>Bacteria</taxon>
        <taxon>Bacillati</taxon>
        <taxon>Bacillota</taxon>
        <taxon>Clostridia</taxon>
        <taxon>Eubacteriales</taxon>
        <taxon>Clostridiaceae</taxon>
        <taxon>Clostridium</taxon>
    </lineage>
</organism>
<keyword id="KW-0131">Cell cycle</keyword>
<keyword id="KW-0132">Cell division</keyword>
<keyword id="KW-1185">Reference proteome</keyword>
<keyword id="KW-0717">Septation</keyword>
<sequence>MVRDSIVVKGNREGLNVIIDMNKFQNFDEMLEIFIHKLSIGKKFYKGSTIIITTQLKEFNEKQISKFEEVLFEDFLIKDCIFKDIRETKNKVFTGVYEGRTKFYRRTLRSGQVINYPGNIVIVGDVNPGSEVYAGGNVIVIGNLCGEVHAGASGNTKAIIAAFKLQPSILQIANIMTRSPEDGPKPSYPEVARIKDGIIIVEPYLPNKFV</sequence>
<accession>A0PZG9</accession>
<protein>
    <recommendedName>
        <fullName evidence="1">Probable septum site-determining protein MinC</fullName>
    </recommendedName>
</protein>
<proteinExistence type="inferred from homology"/>
<name>MINC_CLONN</name>
<dbReference type="EMBL" id="CP000382">
    <property type="protein sequence ID" value="ABK62026.1"/>
    <property type="molecule type" value="Genomic_DNA"/>
</dbReference>
<dbReference type="RefSeq" id="WP_011721778.1">
    <property type="nucleotide sequence ID" value="NC_008593.1"/>
</dbReference>
<dbReference type="SMR" id="A0PZG9"/>
<dbReference type="STRING" id="386415.NT01CX_1692"/>
<dbReference type="DNASU" id="4540157"/>
<dbReference type="KEGG" id="cno:NT01CX_1692"/>
<dbReference type="eggNOG" id="COG0850">
    <property type="taxonomic scope" value="Bacteria"/>
</dbReference>
<dbReference type="HOGENOM" id="CLU_048711_2_0_9"/>
<dbReference type="Proteomes" id="UP000008220">
    <property type="component" value="Chromosome"/>
</dbReference>
<dbReference type="GO" id="GO:0000902">
    <property type="term" value="P:cell morphogenesis"/>
    <property type="evidence" value="ECO:0007669"/>
    <property type="project" value="InterPro"/>
</dbReference>
<dbReference type="GO" id="GO:0000917">
    <property type="term" value="P:division septum assembly"/>
    <property type="evidence" value="ECO:0007669"/>
    <property type="project" value="UniProtKB-KW"/>
</dbReference>
<dbReference type="GO" id="GO:1901891">
    <property type="term" value="P:regulation of cell septum assembly"/>
    <property type="evidence" value="ECO:0007669"/>
    <property type="project" value="InterPro"/>
</dbReference>
<dbReference type="Gene3D" id="2.160.20.70">
    <property type="match status" value="1"/>
</dbReference>
<dbReference type="HAMAP" id="MF_00267">
    <property type="entry name" value="MinC"/>
    <property type="match status" value="1"/>
</dbReference>
<dbReference type="InterPro" id="IPR016098">
    <property type="entry name" value="CAP/MinC_C"/>
</dbReference>
<dbReference type="InterPro" id="IPR013033">
    <property type="entry name" value="MinC"/>
</dbReference>
<dbReference type="InterPro" id="IPR036145">
    <property type="entry name" value="MinC_C_sf"/>
</dbReference>
<dbReference type="InterPro" id="IPR055219">
    <property type="entry name" value="MinC_N_1"/>
</dbReference>
<dbReference type="InterPro" id="IPR005526">
    <property type="entry name" value="Septum_form_inhib_MinC_C"/>
</dbReference>
<dbReference type="NCBIfam" id="NF001775">
    <property type="entry name" value="PRK00513.1-6"/>
    <property type="match status" value="1"/>
</dbReference>
<dbReference type="PANTHER" id="PTHR34108">
    <property type="entry name" value="SEPTUM SITE-DETERMINING PROTEIN MINC"/>
    <property type="match status" value="1"/>
</dbReference>
<dbReference type="PANTHER" id="PTHR34108:SF1">
    <property type="entry name" value="SEPTUM SITE-DETERMINING PROTEIN MINC"/>
    <property type="match status" value="1"/>
</dbReference>
<dbReference type="Pfam" id="PF03775">
    <property type="entry name" value="MinC_C"/>
    <property type="match status" value="1"/>
</dbReference>
<dbReference type="Pfam" id="PF22642">
    <property type="entry name" value="MinC_N_1"/>
    <property type="match status" value="1"/>
</dbReference>
<dbReference type="SUPFAM" id="SSF63848">
    <property type="entry name" value="Cell-division inhibitor MinC, C-terminal domain"/>
    <property type="match status" value="1"/>
</dbReference>
<evidence type="ECO:0000255" key="1">
    <source>
        <dbReference type="HAMAP-Rule" id="MF_00267"/>
    </source>
</evidence>
<comment type="function">
    <text evidence="1">Cell division inhibitor that blocks the formation of polar Z ring septums. Rapidly oscillates between the poles of the cell to destabilize FtsZ filaments that have formed before they mature into polar Z rings. Prevents FtsZ polymerization.</text>
</comment>
<comment type="subunit">
    <text evidence="1">Interacts with MinD and FtsZ.</text>
</comment>
<comment type="similarity">
    <text evidence="1">Belongs to the MinC family.</text>
</comment>
<gene>
    <name evidence="1" type="primary">minC</name>
    <name type="ordered locus">NT01CX_1692</name>
</gene>
<feature type="chain" id="PRO_1000047822" description="Probable septum site-determining protein MinC">
    <location>
        <begin position="1"/>
        <end position="210"/>
    </location>
</feature>
<reference key="1">
    <citation type="journal article" date="2006" name="Nat. Biotechnol.">
        <title>The genome and transcriptomes of the anti-tumor agent Clostridium novyi-NT.</title>
        <authorList>
            <person name="Bettegowda C."/>
            <person name="Huang X."/>
            <person name="Lin J."/>
            <person name="Cheong I."/>
            <person name="Kohli M."/>
            <person name="Szabo S.A."/>
            <person name="Zhang X."/>
            <person name="Diaz L.A. Jr."/>
            <person name="Velculescu V.E."/>
            <person name="Parmigiani G."/>
            <person name="Kinzler K.W."/>
            <person name="Vogelstein B."/>
            <person name="Zhou S."/>
        </authorList>
    </citation>
    <scope>NUCLEOTIDE SEQUENCE [LARGE SCALE GENOMIC DNA]</scope>
    <source>
        <strain>NT</strain>
    </source>
</reference>